<evidence type="ECO:0000250" key="1"/>
<evidence type="ECO:0000250" key="2">
    <source>
        <dbReference type="UniProtKB" id="O76460"/>
    </source>
</evidence>
<evidence type="ECO:0000255" key="3"/>
<evidence type="ECO:0000255" key="4">
    <source>
        <dbReference type="PROSITE-ProRule" id="PRU00541"/>
    </source>
</evidence>
<evidence type="ECO:0000255" key="5">
    <source>
        <dbReference type="PROSITE-ProRule" id="PRU00542"/>
    </source>
</evidence>
<evidence type="ECO:0000256" key="6">
    <source>
        <dbReference type="SAM" id="MobiDB-lite"/>
    </source>
</evidence>
<evidence type="ECO:0000312" key="7">
    <source>
        <dbReference type="EMBL" id="EDW25645.1"/>
    </source>
</evidence>
<feature type="chain" id="PRO_0000392524" description="DNA repair and recombination protein RAD54-like">
    <location>
        <begin position="1"/>
        <end position="782"/>
    </location>
</feature>
<feature type="domain" description="Helicase ATP-binding" evidence="4">
    <location>
        <begin position="168"/>
        <end position="343"/>
    </location>
</feature>
<feature type="domain" description="Helicase C-terminal" evidence="5">
    <location>
        <begin position="501"/>
        <end position="658"/>
    </location>
</feature>
<feature type="region of interest" description="Disordered" evidence="6">
    <location>
        <begin position="1"/>
        <end position="28"/>
    </location>
</feature>
<feature type="region of interest" description="Required for chromatin remodeling, strand pairing activities and coupling of ATPase activity" evidence="2">
    <location>
        <begin position="2"/>
        <end position="9"/>
    </location>
</feature>
<feature type="region of interest" description="Disordered" evidence="6">
    <location>
        <begin position="741"/>
        <end position="782"/>
    </location>
</feature>
<feature type="short sequence motif" description="DEGH box" evidence="3">
    <location>
        <begin position="294"/>
        <end position="297"/>
    </location>
</feature>
<feature type="compositionally biased region" description="Polar residues" evidence="6">
    <location>
        <begin position="1"/>
        <end position="20"/>
    </location>
</feature>
<feature type="compositionally biased region" description="Polar residues" evidence="6">
    <location>
        <begin position="741"/>
        <end position="753"/>
    </location>
</feature>
<feature type="compositionally biased region" description="Acidic residues" evidence="6">
    <location>
        <begin position="773"/>
        <end position="782"/>
    </location>
</feature>
<feature type="binding site" evidence="4">
    <location>
        <begin position="181"/>
        <end position="188"/>
    </location>
    <ligand>
        <name>ATP</name>
        <dbReference type="ChEBI" id="CHEBI:30616"/>
    </ligand>
</feature>
<feature type="modified residue" description="Phosphothreonine" evidence="2">
    <location>
        <position position="22"/>
    </location>
</feature>
<accession>B4GS98</accession>
<organism>
    <name type="scientific">Drosophila persimilis</name>
    <name type="common">Fruit fly</name>
    <dbReference type="NCBI Taxonomy" id="7234"/>
    <lineage>
        <taxon>Eukaryota</taxon>
        <taxon>Metazoa</taxon>
        <taxon>Ecdysozoa</taxon>
        <taxon>Arthropoda</taxon>
        <taxon>Hexapoda</taxon>
        <taxon>Insecta</taxon>
        <taxon>Pterygota</taxon>
        <taxon>Neoptera</taxon>
        <taxon>Endopterygota</taxon>
        <taxon>Diptera</taxon>
        <taxon>Brachycera</taxon>
        <taxon>Muscomorpha</taxon>
        <taxon>Ephydroidea</taxon>
        <taxon>Drosophilidae</taxon>
        <taxon>Drosophila</taxon>
        <taxon>Sophophora</taxon>
    </lineage>
</organism>
<proteinExistence type="inferred from homology"/>
<protein>
    <recommendedName>
        <fullName evidence="2">DNA repair and recombination protein RAD54-like</fullName>
        <ecNumber>3.6.4.-</ecNumber>
    </recommendedName>
    <alternativeName>
        <fullName evidence="2">Protein okra</fullName>
    </alternativeName>
</protein>
<sequence length="782" mass="89103">MRRSLAPSQRGGQRLSSRNDFTPPLLKKNKRACQQDLEQERLRQSALRDATNTSDLPLPIRFTANTEYEMAIAKVLARKFKVPIDNYVPDYGGNRTLGVRRRIVRRPLHDPLACNALVLYHAPNYTDHERMSMEPSSVLVHVVVDPLLSNILRPHQREGVRFMYECVEGKRGNFNGCIMADEMGLGKTLQCVALVWTLLKQSAECKPTINKCIIVSPSSLVKNWEKEFTKWLHGRMHCLAMEGGSKENTVRALEQFSMNASTRLGTPVLLISYETFRIYAEILCKYEVGMVICDEGHRLKNSDNLTYQALMGLKTKRRVLLSGTPIQNDLTEYFSLVNFVNPEMLGTAADFKRNFENCILRGQNADSTDKERDRALEKTQELIKLVDQCIIRRTNQILTKYLPVKFEMVICAKLTPIQLQLYTNFLKSDQVRRSLADCKEKASLTALADITTLKKLCSHPNLICEKIAAGEKGFENSQNILPINYNPKGEINPELSGKFKLLDFMLAAIRAHGNDKVVLISNYTQTLDLFELLARKRKYGFVRLDGTMSIKKRSKVVDRFNDPESDCFLFMLSSKAGGCGLNLIGANRLFMFDPDWNPANDEQAMARVWRDGQKKPCYIYRLVASGSIEEKILQRQTHKKSLSSTIIDNNESAEKHFTRDDLKDLFSFDPDILSDTHDKLKCKRCVQNVQMMPPPDDTDCTSHLSQWYHCSNNRGLPDNILAQAWTDSKCVSFVFHHRSQSQKIEATPATETSVEAKLEPERRKRPAMPLSDDSADEDFQGF</sequence>
<name>RAD54_DROPE</name>
<keyword id="KW-0067">ATP-binding</keyword>
<keyword id="KW-0131">Cell cycle</keyword>
<keyword id="KW-0132">Cell division</keyword>
<keyword id="KW-0227">DNA damage</keyword>
<keyword id="KW-0234">DNA repair</keyword>
<keyword id="KW-0238">DNA-binding</keyword>
<keyword id="KW-0347">Helicase</keyword>
<keyword id="KW-0378">Hydrolase</keyword>
<keyword id="KW-0469">Meiosis</keyword>
<keyword id="KW-0498">Mitosis</keyword>
<keyword id="KW-0547">Nucleotide-binding</keyword>
<keyword id="KW-0539">Nucleus</keyword>
<keyword id="KW-0597">Phosphoprotein</keyword>
<keyword id="KW-1185">Reference proteome</keyword>
<dbReference type="EC" id="3.6.4.-"/>
<dbReference type="EMBL" id="CH479189">
    <property type="protein sequence ID" value="EDW25645.1"/>
    <property type="molecule type" value="Genomic_DNA"/>
</dbReference>
<dbReference type="SMR" id="B4GS98"/>
<dbReference type="STRING" id="7234.B4GS98"/>
<dbReference type="EnsemblMetazoa" id="FBtr0192316">
    <property type="protein sequence ID" value="FBpp0190808"/>
    <property type="gene ID" value="FBgn0164282"/>
</dbReference>
<dbReference type="EnsemblMetazoa" id="XM_002021766.2">
    <property type="protein sequence ID" value="XP_002021802.1"/>
    <property type="gene ID" value="LOC6596280"/>
</dbReference>
<dbReference type="GeneID" id="6596280"/>
<dbReference type="KEGG" id="dpe:6596280"/>
<dbReference type="CTD" id="33507"/>
<dbReference type="eggNOG" id="KOG0390">
    <property type="taxonomic scope" value="Eukaryota"/>
</dbReference>
<dbReference type="HOGENOM" id="CLU_000315_10_5_1"/>
<dbReference type="OMA" id="YTEHERM"/>
<dbReference type="OrthoDB" id="413460at2759"/>
<dbReference type="PhylomeDB" id="B4GS98"/>
<dbReference type="ChiTaRS" id="okr">
    <property type="organism name" value="fly"/>
</dbReference>
<dbReference type="Proteomes" id="UP000008744">
    <property type="component" value="Unassembled WGS sequence"/>
</dbReference>
<dbReference type="GO" id="GO:0005634">
    <property type="term" value="C:nucleus"/>
    <property type="evidence" value="ECO:0000250"/>
    <property type="project" value="UniProtKB"/>
</dbReference>
<dbReference type="GO" id="GO:0005524">
    <property type="term" value="F:ATP binding"/>
    <property type="evidence" value="ECO:0007669"/>
    <property type="project" value="UniProtKB-KW"/>
</dbReference>
<dbReference type="GO" id="GO:0016887">
    <property type="term" value="F:ATP hydrolysis activity"/>
    <property type="evidence" value="ECO:0007669"/>
    <property type="project" value="EnsemblMetazoa"/>
</dbReference>
<dbReference type="GO" id="GO:0140658">
    <property type="term" value="F:ATP-dependent chromatin remodeler activity"/>
    <property type="evidence" value="ECO:0007669"/>
    <property type="project" value="EnsemblMetazoa"/>
</dbReference>
<dbReference type="GO" id="GO:0003677">
    <property type="term" value="F:DNA binding"/>
    <property type="evidence" value="ECO:0007669"/>
    <property type="project" value="UniProtKB-KW"/>
</dbReference>
<dbReference type="GO" id="GO:0015616">
    <property type="term" value="F:DNA translocase activity"/>
    <property type="evidence" value="ECO:0007669"/>
    <property type="project" value="TreeGrafter"/>
</dbReference>
<dbReference type="GO" id="GO:0004386">
    <property type="term" value="F:helicase activity"/>
    <property type="evidence" value="ECO:0007669"/>
    <property type="project" value="UniProtKB-KW"/>
</dbReference>
<dbReference type="GO" id="GO:0051301">
    <property type="term" value="P:cell division"/>
    <property type="evidence" value="ECO:0007669"/>
    <property type="project" value="UniProtKB-KW"/>
</dbReference>
<dbReference type="GO" id="GO:0006338">
    <property type="term" value="P:chromatin remodeling"/>
    <property type="evidence" value="ECO:0000250"/>
    <property type="project" value="UniProtKB"/>
</dbReference>
<dbReference type="GO" id="GO:0043150">
    <property type="term" value="P:DNA synthesis involved in double-strand break repair via homologous recombination"/>
    <property type="evidence" value="ECO:0000250"/>
    <property type="project" value="UniProtKB"/>
</dbReference>
<dbReference type="GO" id="GO:0000724">
    <property type="term" value="P:double-strand break repair via homologous recombination"/>
    <property type="evidence" value="ECO:0000250"/>
    <property type="project" value="UniProtKB"/>
</dbReference>
<dbReference type="GO" id="GO:0045003">
    <property type="term" value="P:double-strand break repair via synthesis-dependent strand annealing"/>
    <property type="evidence" value="ECO:0007669"/>
    <property type="project" value="EnsemblMetazoa"/>
</dbReference>
<dbReference type="GO" id="GO:0000711">
    <property type="term" value="P:meiotic DNA repair synthesis"/>
    <property type="evidence" value="ECO:0000250"/>
    <property type="project" value="UniProtKB"/>
</dbReference>
<dbReference type="GO" id="GO:0030716">
    <property type="term" value="P:oocyte fate determination"/>
    <property type="evidence" value="ECO:0007669"/>
    <property type="project" value="EnsemblMetazoa"/>
</dbReference>
<dbReference type="GO" id="GO:0048477">
    <property type="term" value="P:oogenesis"/>
    <property type="evidence" value="ECO:0007669"/>
    <property type="project" value="EnsemblMetazoa"/>
</dbReference>
<dbReference type="GO" id="GO:0007131">
    <property type="term" value="P:reciprocal meiotic recombination"/>
    <property type="evidence" value="ECO:0007669"/>
    <property type="project" value="EnsemblMetazoa"/>
</dbReference>
<dbReference type="GO" id="GO:0010212">
    <property type="term" value="P:response to ionizing radiation"/>
    <property type="evidence" value="ECO:0000250"/>
    <property type="project" value="UniProtKB"/>
</dbReference>
<dbReference type="CDD" id="cd18067">
    <property type="entry name" value="DEXHc_RAD54A"/>
    <property type="match status" value="1"/>
</dbReference>
<dbReference type="CDD" id="cd18793">
    <property type="entry name" value="SF2_C_SNF"/>
    <property type="match status" value="1"/>
</dbReference>
<dbReference type="FunFam" id="3.40.50.10810:FF:000010">
    <property type="entry name" value="DNA repair and recombination protein RAD54-like"/>
    <property type="match status" value="1"/>
</dbReference>
<dbReference type="FunFam" id="3.40.50.300:FF:000332">
    <property type="entry name" value="DNA repair and recombination protein RAD54-like"/>
    <property type="match status" value="1"/>
</dbReference>
<dbReference type="Gene3D" id="3.40.50.300">
    <property type="entry name" value="P-loop containing nucleotide triphosphate hydrolases"/>
    <property type="match status" value="1"/>
</dbReference>
<dbReference type="Gene3D" id="1.20.120.850">
    <property type="entry name" value="SWI2/SNF2 ATPases, N-terminal domain"/>
    <property type="match status" value="1"/>
</dbReference>
<dbReference type="Gene3D" id="3.40.50.10810">
    <property type="entry name" value="Tandem AAA-ATPase domain"/>
    <property type="match status" value="1"/>
</dbReference>
<dbReference type="InterPro" id="IPR014001">
    <property type="entry name" value="Helicase_ATP-bd"/>
</dbReference>
<dbReference type="InterPro" id="IPR001650">
    <property type="entry name" value="Helicase_C-like"/>
</dbReference>
<dbReference type="InterPro" id="IPR027417">
    <property type="entry name" value="P-loop_NTPase"/>
</dbReference>
<dbReference type="InterPro" id="IPR013967">
    <property type="entry name" value="Rad54_N"/>
</dbReference>
<dbReference type="InterPro" id="IPR038718">
    <property type="entry name" value="SNF2-like_sf"/>
</dbReference>
<dbReference type="InterPro" id="IPR049730">
    <property type="entry name" value="SNF2/RAD54-like_C"/>
</dbReference>
<dbReference type="InterPro" id="IPR000330">
    <property type="entry name" value="SNF2_N"/>
</dbReference>
<dbReference type="InterPro" id="IPR050496">
    <property type="entry name" value="SNF2_RAD54_helicase_repair"/>
</dbReference>
<dbReference type="PANTHER" id="PTHR45629:SF7">
    <property type="entry name" value="DNA EXCISION REPAIR PROTEIN ERCC-6-RELATED"/>
    <property type="match status" value="1"/>
</dbReference>
<dbReference type="PANTHER" id="PTHR45629">
    <property type="entry name" value="SNF2/RAD54 FAMILY MEMBER"/>
    <property type="match status" value="1"/>
</dbReference>
<dbReference type="Pfam" id="PF00271">
    <property type="entry name" value="Helicase_C"/>
    <property type="match status" value="1"/>
</dbReference>
<dbReference type="Pfam" id="PF08658">
    <property type="entry name" value="Rad54_N"/>
    <property type="match status" value="1"/>
</dbReference>
<dbReference type="Pfam" id="PF00176">
    <property type="entry name" value="SNF2-rel_dom"/>
    <property type="match status" value="1"/>
</dbReference>
<dbReference type="SMART" id="SM00487">
    <property type="entry name" value="DEXDc"/>
    <property type="match status" value="1"/>
</dbReference>
<dbReference type="SMART" id="SM00490">
    <property type="entry name" value="HELICc"/>
    <property type="match status" value="1"/>
</dbReference>
<dbReference type="SUPFAM" id="SSF52540">
    <property type="entry name" value="P-loop containing nucleoside triphosphate hydrolases"/>
    <property type="match status" value="2"/>
</dbReference>
<dbReference type="PROSITE" id="PS51192">
    <property type="entry name" value="HELICASE_ATP_BIND_1"/>
    <property type="match status" value="1"/>
</dbReference>
<dbReference type="PROSITE" id="PS51194">
    <property type="entry name" value="HELICASE_CTER"/>
    <property type="match status" value="1"/>
</dbReference>
<comment type="function">
    <text evidence="2">Involved in mitotic DNA repair and meiotic recombination. Functions in the recombinational DNA repair pathway. Essential for interhomolog gene conversion (GC), but may have a less important role in intersister GC than spn-A/Rad51. In the presence of DNA, spn-A/Rad51 enhances the ATPase activity of okr/Rad54 (By similarity).</text>
</comment>
<comment type="subunit">
    <text evidence="1">Interacts (via N-terminus) with spn-A/Rad51.</text>
</comment>
<comment type="subcellular location">
    <subcellularLocation>
        <location evidence="2">Nucleus</location>
    </subcellularLocation>
</comment>
<comment type="similarity">
    <text evidence="3">Belongs to the SNF2/RAD54 helicase family.</text>
</comment>
<reference evidence="7" key="1">
    <citation type="journal article" date="2007" name="Nature">
        <title>Evolution of genes and genomes on the Drosophila phylogeny.</title>
        <authorList>
            <consortium name="Drosophila 12 genomes consortium"/>
        </authorList>
    </citation>
    <scope>NUCLEOTIDE SEQUENCE [LARGE SCALE GENOMIC DNA]</scope>
    <source>
        <strain>MSH-3 / Tucson 14011-0111.49</strain>
    </source>
</reference>
<gene>
    <name evidence="2" type="primary">okr</name>
    <name type="ORF">GL26701</name>
</gene>